<feature type="chain" id="PRO_0000459134" description="Carbamoyl phosphate synthase small chain">
    <location>
        <begin position="1"/>
        <end position="382"/>
    </location>
</feature>
<feature type="domain" description="Glutamine amidotransferase type-1" evidence="1">
    <location>
        <begin position="193"/>
        <end position="380"/>
    </location>
</feature>
<feature type="region of interest" description="CPSase" evidence="1">
    <location>
        <begin position="1"/>
        <end position="189"/>
    </location>
</feature>
<feature type="active site" description="Nucleophile" evidence="1">
    <location>
        <position position="269"/>
    </location>
</feature>
<feature type="active site" evidence="1">
    <location>
        <position position="353"/>
    </location>
</feature>
<feature type="active site" evidence="1">
    <location>
        <position position="355"/>
    </location>
</feature>
<feature type="binding site" evidence="1 3 9">
    <location>
        <position position="47"/>
    </location>
    <ligand>
        <name>L-glutamine</name>
        <dbReference type="ChEBI" id="CHEBI:58359"/>
    </ligand>
</feature>
<feature type="binding site" evidence="1 3 9">
    <location>
        <position position="241"/>
    </location>
    <ligand>
        <name>L-glutamine</name>
        <dbReference type="ChEBI" id="CHEBI:58359"/>
    </ligand>
</feature>
<feature type="binding site" evidence="1 3 9">
    <location>
        <position position="243"/>
    </location>
    <ligand>
        <name>L-glutamine</name>
        <dbReference type="ChEBI" id="CHEBI:58359"/>
    </ligand>
</feature>
<feature type="binding site" evidence="1 3 9">
    <location>
        <position position="270"/>
    </location>
    <ligand>
        <name>L-glutamine</name>
        <dbReference type="ChEBI" id="CHEBI:58359"/>
    </ligand>
</feature>
<feature type="binding site" evidence="1 3 9">
    <location>
        <position position="273"/>
    </location>
    <ligand>
        <name>L-glutamine</name>
        <dbReference type="ChEBI" id="CHEBI:58359"/>
    </ligand>
</feature>
<feature type="binding site" evidence="1 3 9">
    <location>
        <position position="311"/>
    </location>
    <ligand>
        <name>L-glutamine</name>
        <dbReference type="ChEBI" id="CHEBI:58359"/>
    </ligand>
</feature>
<feature type="binding site" evidence="1 3 9">
    <location>
        <position position="313"/>
    </location>
    <ligand>
        <name>L-glutamine</name>
        <dbReference type="ChEBI" id="CHEBI:58359"/>
    </ligand>
</feature>
<feature type="binding site" evidence="1 3 9">
    <location>
        <position position="314"/>
    </location>
    <ligand>
        <name>L-glutamine</name>
        <dbReference type="ChEBI" id="CHEBI:58359"/>
    </ligand>
</feature>
<feature type="strand" evidence="10">
    <location>
        <begin position="4"/>
        <end position="9"/>
    </location>
</feature>
<feature type="strand" evidence="10">
    <location>
        <begin position="14"/>
        <end position="19"/>
    </location>
</feature>
<feature type="strand" evidence="10">
    <location>
        <begin position="23"/>
        <end position="33"/>
    </location>
</feature>
<feature type="helix" evidence="10">
    <location>
        <begin position="39"/>
        <end position="43"/>
    </location>
</feature>
<feature type="helix" evidence="10">
    <location>
        <begin position="46"/>
        <end position="48"/>
    </location>
</feature>
<feature type="strand" evidence="10">
    <location>
        <begin position="51"/>
        <end position="55"/>
    </location>
</feature>
<feature type="strand" evidence="10">
    <location>
        <begin position="57"/>
        <end position="59"/>
    </location>
</feature>
<feature type="helix" evidence="10">
    <location>
        <begin position="67"/>
        <end position="69"/>
    </location>
</feature>
<feature type="strand" evidence="10">
    <location>
        <begin position="71"/>
        <end position="74"/>
    </location>
</feature>
<feature type="strand" evidence="10">
    <location>
        <begin position="77"/>
        <end position="81"/>
    </location>
</feature>
<feature type="helix" evidence="10">
    <location>
        <begin position="98"/>
        <end position="104"/>
    </location>
</feature>
<feature type="strand" evidence="10">
    <location>
        <begin position="108"/>
        <end position="113"/>
    </location>
</feature>
<feature type="helix" evidence="10">
    <location>
        <begin position="115"/>
        <end position="125"/>
    </location>
</feature>
<feature type="strand" evidence="10">
    <location>
        <begin position="128"/>
        <end position="137"/>
    </location>
</feature>
<feature type="helix" evidence="10">
    <location>
        <begin position="140"/>
        <end position="149"/>
    </location>
</feature>
<feature type="strand" evidence="14">
    <location>
        <begin position="153"/>
        <end position="155"/>
    </location>
</feature>
<feature type="helix" evidence="10">
    <location>
        <begin position="159"/>
        <end position="162"/>
    </location>
</feature>
<feature type="strand" evidence="10">
    <location>
        <begin position="168"/>
        <end position="170"/>
    </location>
</feature>
<feature type="turn" evidence="10">
    <location>
        <begin position="177"/>
        <end position="179"/>
    </location>
</feature>
<feature type="helix" evidence="10">
    <location>
        <begin position="187"/>
        <end position="189"/>
    </location>
</feature>
<feature type="strand" evidence="10">
    <location>
        <begin position="192"/>
        <end position="200"/>
    </location>
</feature>
<feature type="helix" evidence="10">
    <location>
        <begin position="203"/>
        <end position="211"/>
    </location>
</feature>
<feature type="strand" evidence="10">
    <location>
        <begin position="214"/>
        <end position="220"/>
    </location>
</feature>
<feature type="helix" evidence="10">
    <location>
        <begin position="225"/>
        <end position="229"/>
    </location>
</feature>
<feature type="strand" evidence="10">
    <location>
        <begin position="234"/>
        <end position="238"/>
    </location>
</feature>
<feature type="strand" evidence="11">
    <location>
        <begin position="242"/>
        <end position="245"/>
    </location>
</feature>
<feature type="helix" evidence="10">
    <location>
        <begin position="249"/>
        <end position="258"/>
    </location>
</feature>
<feature type="turn" evidence="13">
    <location>
        <begin position="259"/>
        <end position="262"/>
    </location>
</feature>
<feature type="strand" evidence="10">
    <location>
        <begin position="265"/>
        <end position="268"/>
    </location>
</feature>
<feature type="helix" evidence="10">
    <location>
        <begin position="270"/>
        <end position="278"/>
    </location>
</feature>
<feature type="strand" evidence="10">
    <location>
        <begin position="283"/>
        <end position="299"/>
    </location>
</feature>
<feature type="turn" evidence="10">
    <location>
        <begin position="300"/>
        <end position="303"/>
    </location>
</feature>
<feature type="strand" evidence="10">
    <location>
        <begin position="304"/>
        <end position="316"/>
    </location>
</feature>
<feature type="helix" evidence="12">
    <location>
        <begin position="318"/>
        <end position="320"/>
    </location>
</feature>
<feature type="strand" evidence="10">
    <location>
        <begin position="325"/>
        <end position="331"/>
    </location>
</feature>
<feature type="turn" evidence="10">
    <location>
        <begin position="332"/>
        <end position="334"/>
    </location>
</feature>
<feature type="strand" evidence="10">
    <location>
        <begin position="337"/>
        <end position="352"/>
    </location>
</feature>
<feature type="strand" evidence="10">
    <location>
        <begin position="357"/>
        <end position="359"/>
    </location>
</feature>
<feature type="turn" evidence="10">
    <location>
        <begin position="362"/>
        <end position="364"/>
    </location>
</feature>
<feature type="helix" evidence="10">
    <location>
        <begin position="365"/>
        <end position="379"/>
    </location>
</feature>
<evidence type="ECO:0000255" key="1">
    <source>
        <dbReference type="HAMAP-Rule" id="MF_01209"/>
    </source>
</evidence>
<evidence type="ECO:0000269" key="2">
    <source>
    </source>
</evidence>
<evidence type="ECO:0000269" key="3">
    <source>
    </source>
</evidence>
<evidence type="ECO:0000269" key="4">
    <source>
    </source>
</evidence>
<evidence type="ECO:0000269" key="5">
    <source>
    </source>
</evidence>
<evidence type="ECO:0000269" key="6">
    <source>
    </source>
</evidence>
<evidence type="ECO:0000269" key="7">
    <source ref="10"/>
</evidence>
<evidence type="ECO:0000305" key="8">
    <source ref="10"/>
</evidence>
<evidence type="ECO:0007744" key="9">
    <source>
        <dbReference type="PDB" id="1C3O"/>
    </source>
</evidence>
<evidence type="ECO:0007829" key="10">
    <source>
        <dbReference type="PDB" id="1A9X"/>
    </source>
</evidence>
<evidence type="ECO:0007829" key="11">
    <source>
        <dbReference type="PDB" id="1CE8"/>
    </source>
</evidence>
<evidence type="ECO:0007829" key="12">
    <source>
        <dbReference type="PDB" id="1CS0"/>
    </source>
</evidence>
<evidence type="ECO:0007829" key="13">
    <source>
        <dbReference type="PDB" id="1JDB"/>
    </source>
</evidence>
<evidence type="ECO:0007829" key="14">
    <source>
        <dbReference type="PDB" id="1T36"/>
    </source>
</evidence>
<reference key="1">
    <citation type="journal article" date="1984" name="Proc. Natl. Acad. Sci. U.S.A.">
        <title>DNA sequence of the carA gene and the control region of carAB: tandem promoters, respectively controlled by arginine and the pyrimidines, regulate the synthesis of carbamoyl-phosphate synthetase in Escherichia coli K-12.</title>
        <authorList>
            <person name="Piette J."/>
            <person name="Nyunoya H."/>
            <person name="Lusty C.J."/>
            <person name="Cunin R."/>
            <person name="Weyens G."/>
            <person name="Crabeel M."/>
            <person name="Charlier D.R.M."/>
            <person name="Glansdorff N."/>
            <person name="Pierard A."/>
        </authorList>
    </citation>
    <scope>NUCLEOTIDE SEQUENCE [GENOMIC DNA]</scope>
</reference>
<reference key="2">
    <citation type="journal article" date="1984" name="Proc. Natl. Acad. Sci. U.S.A.">
        <title>Multiple regulatory signals in the control region of the Escherichia coli carAB operon.</title>
        <authorList>
            <person name="Bouvier J."/>
            <person name="Patte J.-C."/>
            <person name="Stragier P."/>
        </authorList>
    </citation>
    <scope>NUCLEOTIDE SEQUENCE [GENOMIC DNA]</scope>
</reference>
<reference key="3">
    <citation type="journal article" date="1992" name="Nucleic Acids Res.">
        <title>Systematic sequencing of the Escherichia coli genome: analysis of the 0-2.4 min region.</title>
        <authorList>
            <person name="Yura T."/>
            <person name="Mori H."/>
            <person name="Nagai H."/>
            <person name="Nagata T."/>
            <person name="Ishihama A."/>
            <person name="Fujita N."/>
            <person name="Isono K."/>
            <person name="Mizobuchi K."/>
            <person name="Nakata A."/>
        </authorList>
    </citation>
    <scope>NUCLEOTIDE SEQUENCE [LARGE SCALE GENOMIC DNA]</scope>
    <source>
        <strain>K12</strain>
    </source>
</reference>
<reference key="4">
    <citation type="journal article" date="1997" name="Science">
        <title>The complete genome sequence of Escherichia coli K-12.</title>
        <authorList>
            <person name="Blattner F.R."/>
            <person name="Plunkett G. III"/>
            <person name="Bloch C.A."/>
            <person name="Perna N.T."/>
            <person name="Burland V."/>
            <person name="Riley M."/>
            <person name="Collado-Vides J."/>
            <person name="Glasner J.D."/>
            <person name="Rode C.K."/>
            <person name="Mayhew G.F."/>
            <person name="Gregor J."/>
            <person name="Davis N.W."/>
            <person name="Kirkpatrick H.A."/>
            <person name="Goeden M.A."/>
            <person name="Rose D.J."/>
            <person name="Mau B."/>
            <person name="Shao Y."/>
        </authorList>
    </citation>
    <scope>NUCLEOTIDE SEQUENCE [LARGE SCALE GENOMIC DNA]</scope>
    <source>
        <strain>K12 / MG1655 / ATCC 47076</strain>
    </source>
</reference>
<reference key="5">
    <citation type="journal article" date="2006" name="Mol. Syst. Biol.">
        <title>Highly accurate genome sequences of Escherichia coli K-12 strains MG1655 and W3110.</title>
        <authorList>
            <person name="Hayashi K."/>
            <person name="Morooka N."/>
            <person name="Yamamoto Y."/>
            <person name="Fujita K."/>
            <person name="Isono K."/>
            <person name="Choi S."/>
            <person name="Ohtsubo E."/>
            <person name="Baba T."/>
            <person name="Wanner B.L."/>
            <person name="Mori H."/>
            <person name="Horiuchi T."/>
        </authorList>
    </citation>
    <scope>NUCLEOTIDE SEQUENCE [LARGE SCALE GENOMIC DNA]</scope>
    <source>
        <strain>K12 / W3110 / ATCC 27325 / DSM 5911</strain>
    </source>
</reference>
<reference key="6">
    <citation type="journal article" date="1983" name="Proc. Natl. Acad. Sci. U.S.A.">
        <title>The carB gene of Escherichia coli: a duplicated gene coding for the large subunit of carbamoyl-phosphate synthetase.</title>
        <authorList>
            <person name="Nyunoya H."/>
            <person name="Lusty C.J."/>
        </authorList>
    </citation>
    <scope>NUCLEOTIDE SEQUENCE [GENOMIC DNA] OF 361-382</scope>
</reference>
<reference key="7">
    <citation type="journal article" date="1992" name="Nature">
        <title>A whole genome approach to in vivo DNA-protein interactions in E. coli.</title>
        <authorList>
            <person name="Wang M.X."/>
            <person name="Church G.M."/>
        </authorList>
    </citation>
    <scope>NUCLEOTIDE SEQUENCE [GENOMIC DNA] OF 1-16</scope>
    <source>
        <strain>K12</strain>
    </source>
</reference>
<reference key="8">
    <citation type="journal article" date="1997" name="Electrophoresis">
        <title>Comparing the predicted and observed properties of proteins encoded in the genome of Escherichia coli K-12.</title>
        <authorList>
            <person name="Link A.J."/>
            <person name="Robison K."/>
            <person name="Church G.M."/>
        </authorList>
    </citation>
    <scope>PROTEIN SEQUENCE OF 1-12</scope>
    <source>
        <strain>K12 / EMG2</strain>
    </source>
</reference>
<reference key="9">
    <citation type="journal article" date="1971" name="Proc. Natl. Acad. Sci. U.S.A.">
        <title>Reversible dissociation of carbamyl phosphate synthetase into a regulated synthesis subunit and a subunit required for glutamine utilization.</title>
        <authorList>
            <person name="Trotta P.P."/>
            <person name="Burt M.E."/>
            <person name="Haschemeyer R.H."/>
            <person name="Meister A."/>
        </authorList>
    </citation>
    <scope>FUNCTION</scope>
    <scope>CATALYTIC ACTIVITY</scope>
    <scope>SUBUNIT</scope>
</reference>
<reference key="10">
    <citation type="book" date="1973" name="The Enzymes of Glutamine Metabolism">
        <title>A comparison of the organization of carbamylphosphate synthesis in Saccharomyces cerevisiae and Escherichia coli, based on genetical and biochemical evidences.</title>
        <editorList>
            <person name="Prusiner S.B."/>
            <person name="Stadtman E.R."/>
        </editorList>
        <authorList>
            <person name="Pierard A."/>
            <person name="Grenson M."/>
            <person name="Glansdorff N."/>
            <person name="Wiame J.M."/>
        </authorList>
    </citation>
    <scope>FUNCTION</scope>
    <scope>PATHWAY</scope>
</reference>
<reference key="11">
    <citation type="journal article" date="1985" name="Methods Enzymol.">
        <title>Carbamyl phosphate synthetase (glutamine-utilizing) from Escherichia coli.</title>
        <authorList>
            <person name="Kaseman D.S."/>
            <person name="Meister A."/>
        </authorList>
    </citation>
    <scope>FUNCTION</scope>
</reference>
<reference key="12">
    <citation type="journal article" date="1989" name="Adv. Enzymol. Relat. Areas Mol. Biol.">
        <title>Mechanism and regulation of the glutamine-dependent carbamyl phosphate synthetase of Escherichia coli.</title>
        <authorList>
            <person name="Meister A."/>
        </authorList>
    </citation>
    <scope>FUNCTION</scope>
</reference>
<reference key="13">
    <citation type="journal article" date="1997" name="Electrophoresis">
        <title>Escherichia coli proteome analysis using the gene-protein database.</title>
        <authorList>
            <person name="VanBogelen R.A."/>
            <person name="Abshire K.Z."/>
            <person name="Moldover B."/>
            <person name="Olson E.R."/>
            <person name="Neidhardt F.C."/>
        </authorList>
    </citation>
    <scope>IDENTIFICATION BY 2D-GEL</scope>
</reference>
<reference key="14">
    <citation type="journal article" date="1997" name="Biochemistry">
        <title>Structure of carbamoyl phosphate synthetase: a journey of 96 A from substrate to product.</title>
        <authorList>
            <person name="Thoden J.B."/>
            <person name="Holden H.M."/>
            <person name="Wesenberg G."/>
            <person name="Raushel F.M."/>
            <person name="Rayment I."/>
        </authorList>
    </citation>
    <scope>X-RAY CRYSTALLOGRAPHY (2.1 ANGSTROMS)</scope>
</reference>
<reference evidence="9" key="15">
    <citation type="journal article" date="1998" name="Biochemistry">
        <title>Carbamoyl phosphate synthetase: caught in the act of glutamine hydrolysis.</title>
        <authorList>
            <person name="Thoden J.B."/>
            <person name="Miran S.G."/>
            <person name="Phillips J.C."/>
            <person name="Howard A.J."/>
            <person name="Raushel F.M."/>
            <person name="Holden H.M."/>
        </authorList>
    </citation>
    <scope>X-RAY CRYSTALLOGRAPHY (1.8 ANGSTROMS) OF MUTANT ASP-353</scope>
</reference>
<reference key="16">
    <citation type="journal article" date="1999" name="Acta Crystallogr. D">
        <title>The structure of carbamoyl phosphate synthetase determined to 2.1-A resolution.</title>
        <authorList>
            <person name="Thoden J.B."/>
            <person name="Raushel F.M."/>
            <person name="Benning M.M."/>
            <person name="Rayment I."/>
            <person name="Holden H.M."/>
        </authorList>
    </citation>
    <scope>X-RAY CRYSTALLOGRAPHY (2.1 ANGSTROMS)</scope>
    <scope>SUBUNIT</scope>
</reference>
<reference key="17">
    <citation type="journal article" date="1999" name="Biochemistry">
        <title>Carbamoyl phosphate synthetase: closure of the B-domain as a result of nucleotide binding.</title>
        <authorList>
            <person name="Thoden J.B."/>
            <person name="Wesenberg G."/>
            <person name="Raushel F.M."/>
            <person name="Holden H.M."/>
        </authorList>
    </citation>
    <scope>X-RAY CRYSTALLOGRAPHY (2.1 ANGSTROMS)</scope>
</reference>
<reference key="18">
    <citation type="journal article" date="1999" name="Biochemistry">
        <title>The small subunit of carbamoyl phosphate synthetase: snapshots along the reaction pathway.</title>
        <authorList>
            <person name="Thoden J.B."/>
            <person name="Huang X."/>
            <person name="Raushel F.M."/>
            <person name="Holden H.M."/>
        </authorList>
    </citation>
    <scope>X-RAY CRYSTALLOGRAPHY (2.0 ANGSTROMS) IN COMPLEX WITH L-GLUTAMINE</scope>
</reference>
<reference key="19">
    <citation type="journal article" date="1999" name="J. Biol. Chem.">
        <title>The binding of inosine monophosphate to Escherichia coli carbamoyl phosphate synthetase.</title>
        <authorList>
            <person name="Thoden J.B."/>
            <person name="Raushel F.M."/>
            <person name="Wesenberg G."/>
            <person name="Holden H.M."/>
        </authorList>
    </citation>
    <scope>X-RAY CRYSTALLOGRAPHY (2.1 ANGSTROMS)</scope>
</reference>
<gene>
    <name evidence="1" type="primary">carA</name>
    <name type="synonym">pyrA</name>
    <name type="ordered locus">b0032</name>
    <name type="ordered locus">JW0030</name>
</gene>
<name>CARA_ECOLI</name>
<dbReference type="EC" id="6.3.5.5" evidence="1 6"/>
<dbReference type="EMBL" id="J01597">
    <property type="protein sequence ID" value="AAA23538.1"/>
    <property type="molecule type" value="Genomic_DNA"/>
</dbReference>
<dbReference type="EMBL" id="U00096">
    <property type="protein sequence ID" value="AAC73143.1"/>
    <property type="molecule type" value="Genomic_DNA"/>
</dbReference>
<dbReference type="EMBL" id="AP009048">
    <property type="protein sequence ID" value="BAB96601.1"/>
    <property type="molecule type" value="Genomic_DNA"/>
</dbReference>
<dbReference type="EMBL" id="X70017">
    <property type="protein sequence ID" value="CAA49615.1"/>
    <property type="molecule type" value="Genomic_DNA"/>
</dbReference>
<dbReference type="PIR" id="A01128">
    <property type="entry name" value="SYECCS"/>
</dbReference>
<dbReference type="PIR" id="B85484">
    <property type="entry name" value="B85484"/>
</dbReference>
<dbReference type="RefSeq" id="NP_414573.1">
    <property type="nucleotide sequence ID" value="NC_000913.3"/>
</dbReference>
<dbReference type="RefSeq" id="WP_000597260.1">
    <property type="nucleotide sequence ID" value="NZ_STEB01000010.1"/>
</dbReference>
<dbReference type="PDB" id="1A9X">
    <property type="method" value="X-ray"/>
    <property type="resolution" value="1.80 A"/>
    <property type="chains" value="B/D/F/H=2-380"/>
</dbReference>
<dbReference type="PDB" id="1BXR">
    <property type="method" value="X-ray"/>
    <property type="resolution" value="2.10 A"/>
    <property type="chains" value="B/D/F/H=1-382"/>
</dbReference>
<dbReference type="PDB" id="1C30">
    <property type="method" value="X-ray"/>
    <property type="resolution" value="2.00 A"/>
    <property type="chains" value="B/D/F/H=1-382"/>
</dbReference>
<dbReference type="PDB" id="1C3O">
    <property type="method" value="X-ray"/>
    <property type="resolution" value="2.10 A"/>
    <property type="chains" value="B/D/F/H=1-382"/>
</dbReference>
<dbReference type="PDB" id="1CE8">
    <property type="method" value="X-ray"/>
    <property type="resolution" value="2.10 A"/>
    <property type="chains" value="B/D/F/H=1-380"/>
</dbReference>
<dbReference type="PDB" id="1CS0">
    <property type="method" value="X-ray"/>
    <property type="resolution" value="2.00 A"/>
    <property type="chains" value="B/D/F/H=1-382"/>
</dbReference>
<dbReference type="PDB" id="1JDB">
    <property type="method" value="X-ray"/>
    <property type="resolution" value="2.10 A"/>
    <property type="chains" value="C/F/I/L=1-382"/>
</dbReference>
<dbReference type="PDB" id="1KEE">
    <property type="method" value="X-ray"/>
    <property type="resolution" value="2.10 A"/>
    <property type="chains" value="B/D/F/H=1-382"/>
</dbReference>
<dbReference type="PDB" id="1M6V">
    <property type="method" value="X-ray"/>
    <property type="resolution" value="2.10 A"/>
    <property type="chains" value="B/D/F/H=1-382"/>
</dbReference>
<dbReference type="PDB" id="1T36">
    <property type="method" value="X-ray"/>
    <property type="resolution" value="2.10 A"/>
    <property type="chains" value="B/D/F/H=1-382"/>
</dbReference>
<dbReference type="PDBsum" id="1A9X"/>
<dbReference type="PDBsum" id="1BXR"/>
<dbReference type="PDBsum" id="1C30"/>
<dbReference type="PDBsum" id="1C3O"/>
<dbReference type="PDBsum" id="1CE8"/>
<dbReference type="PDBsum" id="1CS0"/>
<dbReference type="PDBsum" id="1JDB"/>
<dbReference type="PDBsum" id="1KEE"/>
<dbReference type="PDBsum" id="1M6V"/>
<dbReference type="PDBsum" id="1T36"/>
<dbReference type="SMR" id="P0A6F1"/>
<dbReference type="BioGRID" id="4263445">
    <property type="interactions" value="64"/>
</dbReference>
<dbReference type="BioGRID" id="853269">
    <property type="interactions" value="2"/>
</dbReference>
<dbReference type="ComplexPortal" id="CPX-1937">
    <property type="entry name" value="Carbamoyl phosphate synthetase complex"/>
</dbReference>
<dbReference type="DIP" id="DIP-35412N"/>
<dbReference type="FunCoup" id="P0A6F1">
    <property type="interactions" value="954"/>
</dbReference>
<dbReference type="IntAct" id="P0A6F1">
    <property type="interactions" value="16"/>
</dbReference>
<dbReference type="STRING" id="511145.b0032"/>
<dbReference type="BindingDB" id="P0A6F1"/>
<dbReference type="MEROPS" id="C26.954"/>
<dbReference type="jPOST" id="P0A6F1"/>
<dbReference type="PaxDb" id="511145-b0032"/>
<dbReference type="EnsemblBacteria" id="AAC73143">
    <property type="protein sequence ID" value="AAC73143"/>
    <property type="gene ID" value="b0032"/>
</dbReference>
<dbReference type="GeneID" id="93777404"/>
<dbReference type="GeneID" id="949025"/>
<dbReference type="KEGG" id="ecj:JW0030"/>
<dbReference type="KEGG" id="eco:b0032"/>
<dbReference type="KEGG" id="ecoc:C3026_00165"/>
<dbReference type="PATRIC" id="fig|1411691.4.peg.2252"/>
<dbReference type="EchoBASE" id="EB0132"/>
<dbReference type="eggNOG" id="COG0505">
    <property type="taxonomic scope" value="Bacteria"/>
</dbReference>
<dbReference type="HOGENOM" id="CLU_035901_1_1_6"/>
<dbReference type="InParanoid" id="P0A6F1"/>
<dbReference type="OMA" id="CFSVQYH"/>
<dbReference type="OrthoDB" id="9804328at2"/>
<dbReference type="PhylomeDB" id="P0A6F1"/>
<dbReference type="BioCyc" id="EcoCyc:CARBPSYN-SMALL"/>
<dbReference type="BioCyc" id="MetaCyc:CARBPSYN-SMALL"/>
<dbReference type="SABIO-RK" id="P0A6F1"/>
<dbReference type="UniPathway" id="UPA00068">
    <property type="reaction ID" value="UER00171"/>
</dbReference>
<dbReference type="UniPathway" id="UPA00070">
    <property type="reaction ID" value="UER00115"/>
</dbReference>
<dbReference type="EvolutionaryTrace" id="P0A6F1"/>
<dbReference type="PRO" id="PR:P0A6F1"/>
<dbReference type="Proteomes" id="UP000000625">
    <property type="component" value="Chromosome"/>
</dbReference>
<dbReference type="GO" id="GO:0005951">
    <property type="term" value="C:carbamoyl-phosphate synthase complex"/>
    <property type="evidence" value="ECO:0000314"/>
    <property type="project" value="EcoCyc"/>
</dbReference>
<dbReference type="GO" id="GO:0005737">
    <property type="term" value="C:cytoplasm"/>
    <property type="evidence" value="ECO:0000314"/>
    <property type="project" value="EcoliWiki"/>
</dbReference>
<dbReference type="GO" id="GO:0005829">
    <property type="term" value="C:cytosol"/>
    <property type="evidence" value="ECO:0000314"/>
    <property type="project" value="EcoCyc"/>
</dbReference>
<dbReference type="GO" id="GO:0005524">
    <property type="term" value="F:ATP binding"/>
    <property type="evidence" value="ECO:0007669"/>
    <property type="project" value="UniProtKB-UniRule"/>
</dbReference>
<dbReference type="GO" id="GO:0004088">
    <property type="term" value="F:carbamoyl-phosphate synthase (glutamine-hydrolyzing) activity"/>
    <property type="evidence" value="ECO:0007669"/>
    <property type="project" value="UniProtKB-UniRule"/>
</dbReference>
<dbReference type="GO" id="GO:0004359">
    <property type="term" value="F:glutaminase activity"/>
    <property type="evidence" value="ECO:0007669"/>
    <property type="project" value="RHEA"/>
</dbReference>
<dbReference type="GO" id="GO:0046982">
    <property type="term" value="F:protein heterodimerization activity"/>
    <property type="evidence" value="ECO:0000314"/>
    <property type="project" value="UniProtKB"/>
</dbReference>
<dbReference type="GO" id="GO:0006207">
    <property type="term" value="P:'de novo' pyrimidine nucleobase biosynthetic process"/>
    <property type="evidence" value="ECO:0000315"/>
    <property type="project" value="EcoliWiki"/>
</dbReference>
<dbReference type="GO" id="GO:0044205">
    <property type="term" value="P:'de novo' UMP biosynthetic process"/>
    <property type="evidence" value="ECO:0007669"/>
    <property type="project" value="UniProtKB-UniRule"/>
</dbReference>
<dbReference type="GO" id="GO:0006541">
    <property type="term" value="P:glutamine metabolic process"/>
    <property type="evidence" value="ECO:0000315"/>
    <property type="project" value="EcoliWiki"/>
</dbReference>
<dbReference type="GO" id="GO:0006526">
    <property type="term" value="P:L-arginine biosynthetic process"/>
    <property type="evidence" value="ECO:0000315"/>
    <property type="project" value="EcoCyc"/>
</dbReference>
<dbReference type="GO" id="GO:0019856">
    <property type="term" value="P:pyrimidine nucleobase biosynthetic process"/>
    <property type="evidence" value="ECO:0000315"/>
    <property type="project" value="EcoCyc"/>
</dbReference>
<dbReference type="CDD" id="cd01744">
    <property type="entry name" value="GATase1_CPSase"/>
    <property type="match status" value="1"/>
</dbReference>
<dbReference type="FunFam" id="3.40.50.880:FF:000011">
    <property type="entry name" value="Carbamoyl-phosphate synthase small chain"/>
    <property type="match status" value="1"/>
</dbReference>
<dbReference type="FunFam" id="3.50.30.20:FF:000001">
    <property type="entry name" value="Carbamoyl-phosphate synthase small chain"/>
    <property type="match status" value="1"/>
</dbReference>
<dbReference type="Gene3D" id="3.40.50.880">
    <property type="match status" value="1"/>
</dbReference>
<dbReference type="Gene3D" id="3.50.30.20">
    <property type="entry name" value="Carbamoyl-phosphate synthase small subunit, N-terminal domain"/>
    <property type="match status" value="1"/>
</dbReference>
<dbReference type="HAMAP" id="MF_01209">
    <property type="entry name" value="CPSase_S_chain"/>
    <property type="match status" value="1"/>
</dbReference>
<dbReference type="InterPro" id="IPR050472">
    <property type="entry name" value="Anth_synth/Amidotransfase"/>
</dbReference>
<dbReference type="InterPro" id="IPR006274">
    <property type="entry name" value="CarbamoylP_synth_ssu"/>
</dbReference>
<dbReference type="InterPro" id="IPR002474">
    <property type="entry name" value="CarbamoylP_synth_ssu_N"/>
</dbReference>
<dbReference type="InterPro" id="IPR036480">
    <property type="entry name" value="CarbP_synth_ssu_N_sf"/>
</dbReference>
<dbReference type="InterPro" id="IPR029062">
    <property type="entry name" value="Class_I_gatase-like"/>
</dbReference>
<dbReference type="InterPro" id="IPR035686">
    <property type="entry name" value="CPSase_GATase1"/>
</dbReference>
<dbReference type="InterPro" id="IPR017926">
    <property type="entry name" value="GATASE"/>
</dbReference>
<dbReference type="NCBIfam" id="TIGR01368">
    <property type="entry name" value="CPSaseIIsmall"/>
    <property type="match status" value="1"/>
</dbReference>
<dbReference type="NCBIfam" id="NF009475">
    <property type="entry name" value="PRK12838.1"/>
    <property type="match status" value="1"/>
</dbReference>
<dbReference type="PANTHER" id="PTHR43418:SF7">
    <property type="entry name" value="CARBAMOYL-PHOSPHATE SYNTHASE SMALL CHAIN"/>
    <property type="match status" value="1"/>
</dbReference>
<dbReference type="PANTHER" id="PTHR43418">
    <property type="entry name" value="MULTIFUNCTIONAL TRYPTOPHAN BIOSYNTHESIS PROTEIN-RELATED"/>
    <property type="match status" value="1"/>
</dbReference>
<dbReference type="Pfam" id="PF00988">
    <property type="entry name" value="CPSase_sm_chain"/>
    <property type="match status" value="1"/>
</dbReference>
<dbReference type="Pfam" id="PF00117">
    <property type="entry name" value="GATase"/>
    <property type="match status" value="1"/>
</dbReference>
<dbReference type="PRINTS" id="PR00097">
    <property type="entry name" value="ANTSNTHASEII"/>
</dbReference>
<dbReference type="PRINTS" id="PR00099">
    <property type="entry name" value="CPSGATASE"/>
</dbReference>
<dbReference type="PRINTS" id="PR00096">
    <property type="entry name" value="GATASE"/>
</dbReference>
<dbReference type="SMART" id="SM01097">
    <property type="entry name" value="CPSase_sm_chain"/>
    <property type="match status" value="1"/>
</dbReference>
<dbReference type="SUPFAM" id="SSF52021">
    <property type="entry name" value="Carbamoyl phosphate synthetase, small subunit N-terminal domain"/>
    <property type="match status" value="1"/>
</dbReference>
<dbReference type="SUPFAM" id="SSF52317">
    <property type="entry name" value="Class I glutamine amidotransferase-like"/>
    <property type="match status" value="1"/>
</dbReference>
<dbReference type="PROSITE" id="PS51273">
    <property type="entry name" value="GATASE_TYPE_1"/>
    <property type="match status" value="1"/>
</dbReference>
<comment type="function">
    <text evidence="1 4 5 6 7">Small subunit of the glutamine-dependent carbamoyl phosphate synthetase (CPSase). CPSase catalyzes the formation of carbamoyl phosphate from the ammonia moiety of glutamine, carbonate, and phosphate donated by ATP, constituting the first step of 2 biosynthetic pathways, one leading to arginine and/or urea and the other to pyrimidine nucleotides. The small subunit (glutamine amidotransferase) binds and cleaves glutamine to supply the large subunit with the substrate ammonia.</text>
</comment>
<comment type="catalytic activity">
    <reaction evidence="1 6">
        <text>hydrogencarbonate + L-glutamine + 2 ATP + H2O = carbamoyl phosphate + L-glutamate + 2 ADP + phosphate + 2 H(+)</text>
        <dbReference type="Rhea" id="RHEA:18633"/>
        <dbReference type="ChEBI" id="CHEBI:15377"/>
        <dbReference type="ChEBI" id="CHEBI:15378"/>
        <dbReference type="ChEBI" id="CHEBI:17544"/>
        <dbReference type="ChEBI" id="CHEBI:29985"/>
        <dbReference type="ChEBI" id="CHEBI:30616"/>
        <dbReference type="ChEBI" id="CHEBI:43474"/>
        <dbReference type="ChEBI" id="CHEBI:58228"/>
        <dbReference type="ChEBI" id="CHEBI:58359"/>
        <dbReference type="ChEBI" id="CHEBI:456216"/>
        <dbReference type="EC" id="6.3.5.5"/>
    </reaction>
</comment>
<comment type="catalytic activity">
    <molecule>Carbamoyl phosphate synthase small chain</molecule>
    <reaction evidence="1 6">
        <text>L-glutamine + H2O = L-glutamate + NH4(+)</text>
        <dbReference type="Rhea" id="RHEA:15889"/>
        <dbReference type="ChEBI" id="CHEBI:15377"/>
        <dbReference type="ChEBI" id="CHEBI:28938"/>
        <dbReference type="ChEBI" id="CHEBI:29985"/>
        <dbReference type="ChEBI" id="CHEBI:58359"/>
    </reaction>
</comment>
<comment type="pathway">
    <text evidence="1 8">Amino-acid biosynthesis; L-arginine biosynthesis; carbamoyl phosphate from bicarbonate: step 1/1.</text>
</comment>
<comment type="pathway">
    <text evidence="1 8">Pyrimidine metabolism; UMP biosynthesis via de novo pathway; (S)-dihydroorotate from bicarbonate: step 1/3.</text>
</comment>
<comment type="subunit">
    <text evidence="1 2 6">Composed of two chains; the small (or glutamine) chain promotes the hydrolysis of glutamine to ammonia, which is used by the large (or ammonia) chain to synthesize carbamoyl phosphate. Tetramer of heterodimers (alpha,beta)4.</text>
</comment>
<comment type="interaction">
    <interactant intactId="EBI-546107">
        <id>P0A6F1</id>
    </interactant>
    <interactant intactId="EBI-546118">
        <id>P00968</id>
        <label>carB</label>
    </interactant>
    <organismsDiffer>false</organismsDiffer>
    <experiments>14</experiments>
</comment>
<comment type="interaction">
    <interactant intactId="EBI-546107">
        <id>P0A6F1</id>
    </interactant>
    <interactant intactId="EBI-553061">
        <id>P22188</id>
        <label>murE</label>
    </interactant>
    <organismsDiffer>false</organismsDiffer>
    <experiments>2</experiments>
</comment>
<comment type="interaction">
    <interactant intactId="EBI-546107">
        <id>P0A6F1</id>
    </interactant>
    <interactant intactId="EBI-1127956">
        <id>P0AD21</id>
        <label>yejG</label>
    </interactant>
    <organismsDiffer>false</organismsDiffer>
    <experiments>2</experiments>
</comment>
<comment type="similarity">
    <text evidence="1">Belongs to the CarA family.</text>
</comment>
<proteinExistence type="evidence at protein level"/>
<accession>P0A6F1</accession>
<accession>P00907</accession>
<keyword id="KW-0002">3D-structure</keyword>
<keyword id="KW-0028">Amino-acid biosynthesis</keyword>
<keyword id="KW-0055">Arginine biosynthesis</keyword>
<keyword id="KW-0067">ATP-binding</keyword>
<keyword id="KW-0903">Direct protein sequencing</keyword>
<keyword id="KW-0315">Glutamine amidotransferase</keyword>
<keyword id="KW-0436">Ligase</keyword>
<keyword id="KW-0547">Nucleotide-binding</keyword>
<keyword id="KW-0665">Pyrimidine biosynthesis</keyword>
<keyword id="KW-1185">Reference proteome</keyword>
<sequence>MIKSALLVLEDGTQFHGRAIGATGSAVGEVVFNTSMTGYQEILTDPSYSRQIVTLTYPHIGNVGTNDADEESSQVHAQGLVIRDLPLIASNFRNTEDLSSYLKRHNIVAIADIDTRKLTRLLREKGAQNGCIIAGDNPDAALALEKARAFPGLNGMDLAKEVTTAEAYSWTQGSWTLTGGLPEAKKEDELPFHVVAYDFGAKRNILRMLVDRGCRLTIVPAQTSAEDVLKMNPDGIFLSNGPGDPAPCDYAITAIQKFLETDIPVFGICLGHQLLALASGAKTVKMKFGHHGGNHPVKDVEKNVVMITAQNHGFAVDEATLPANLRVTHKSLFDGTLQGIHRTDKPAFSFQGHPEASPGPHDAAPLFDHFIELIEQYRKTAK</sequence>
<organism>
    <name type="scientific">Escherichia coli (strain K12)</name>
    <dbReference type="NCBI Taxonomy" id="83333"/>
    <lineage>
        <taxon>Bacteria</taxon>
        <taxon>Pseudomonadati</taxon>
        <taxon>Pseudomonadota</taxon>
        <taxon>Gammaproteobacteria</taxon>
        <taxon>Enterobacterales</taxon>
        <taxon>Enterobacteriaceae</taxon>
        <taxon>Escherichia</taxon>
    </lineage>
</organism>
<protein>
    <recommendedName>
        <fullName evidence="1">Carbamoyl phosphate synthase small chain</fullName>
        <ecNumber evidence="1 6">6.3.5.5</ecNumber>
    </recommendedName>
    <alternativeName>
        <fullName evidence="1">Carbamoyl phosphate synthetase glutamine chain</fullName>
    </alternativeName>
</protein>